<evidence type="ECO:0000255" key="1">
    <source>
        <dbReference type="HAMAP-Rule" id="MF_00500"/>
    </source>
</evidence>
<evidence type="ECO:0000256" key="2">
    <source>
        <dbReference type="SAM" id="MobiDB-lite"/>
    </source>
</evidence>
<evidence type="ECO:0000305" key="3"/>
<organism>
    <name type="scientific">Herminiimonas arsenicoxydans</name>
    <dbReference type="NCBI Taxonomy" id="204773"/>
    <lineage>
        <taxon>Bacteria</taxon>
        <taxon>Pseudomonadati</taxon>
        <taxon>Pseudomonadota</taxon>
        <taxon>Betaproteobacteria</taxon>
        <taxon>Burkholderiales</taxon>
        <taxon>Oxalobacteraceae</taxon>
        <taxon>Herminiimonas</taxon>
    </lineage>
</organism>
<name>RS20_HERAR</name>
<accession>A4G7U3</accession>
<proteinExistence type="inferred from homology"/>
<protein>
    <recommendedName>
        <fullName evidence="1">Small ribosomal subunit protein bS20</fullName>
    </recommendedName>
    <alternativeName>
        <fullName evidence="3">30S ribosomal protein S20</fullName>
    </alternativeName>
</protein>
<comment type="function">
    <text evidence="1">Binds directly to 16S ribosomal RNA.</text>
</comment>
<comment type="similarity">
    <text evidence="1">Belongs to the bacterial ribosomal protein bS20 family.</text>
</comment>
<keyword id="KW-1185">Reference proteome</keyword>
<keyword id="KW-0687">Ribonucleoprotein</keyword>
<keyword id="KW-0689">Ribosomal protein</keyword>
<keyword id="KW-0694">RNA-binding</keyword>
<keyword id="KW-0699">rRNA-binding</keyword>
<feature type="chain" id="PRO_1000014593" description="Small ribosomal subunit protein bS20">
    <location>
        <begin position="1"/>
        <end position="87"/>
    </location>
</feature>
<feature type="region of interest" description="Disordered" evidence="2">
    <location>
        <begin position="1"/>
        <end position="29"/>
    </location>
</feature>
<feature type="compositionally biased region" description="Polar residues" evidence="2">
    <location>
        <begin position="20"/>
        <end position="29"/>
    </location>
</feature>
<reference key="1">
    <citation type="journal article" date="2007" name="PLoS Genet.">
        <title>A tale of two oxidation states: bacterial colonization of arsenic-rich environments.</title>
        <authorList>
            <person name="Muller D."/>
            <person name="Medigue C."/>
            <person name="Koechler S."/>
            <person name="Barbe V."/>
            <person name="Barakat M."/>
            <person name="Talla E."/>
            <person name="Bonnefoy V."/>
            <person name="Krin E."/>
            <person name="Arsene-Ploetze F."/>
            <person name="Carapito C."/>
            <person name="Chandler M."/>
            <person name="Cournoyer B."/>
            <person name="Cruveiller S."/>
            <person name="Dossat C."/>
            <person name="Duval S."/>
            <person name="Heymann M."/>
            <person name="Leize E."/>
            <person name="Lieutaud A."/>
            <person name="Lievremont D."/>
            <person name="Makita Y."/>
            <person name="Mangenot S."/>
            <person name="Nitschke W."/>
            <person name="Ortet P."/>
            <person name="Perdrial N."/>
            <person name="Schoepp B."/>
            <person name="Siguier P."/>
            <person name="Simeonova D.D."/>
            <person name="Rouy Z."/>
            <person name="Segurens B."/>
            <person name="Turlin E."/>
            <person name="Vallenet D."/>
            <person name="van Dorsselaer A."/>
            <person name="Weiss S."/>
            <person name="Weissenbach J."/>
            <person name="Lett M.-C."/>
            <person name="Danchin A."/>
            <person name="Bertin P.N."/>
        </authorList>
    </citation>
    <scope>NUCLEOTIDE SEQUENCE [LARGE SCALE GENOMIC DNA]</scope>
    <source>
        <strain>ULPAs1</strain>
    </source>
</reference>
<gene>
    <name evidence="1" type="primary">rpsT</name>
    <name type="ordered locus">HEAR2451</name>
</gene>
<sequence>MANTAQARKRARQAVKQNAHNSSQRSTLRTAVKAVRKAIEAGDKTAAAQVFLASVSTIDRIADKKIIHKNKAARHKSRLAAALKALA</sequence>
<dbReference type="EMBL" id="CU207211">
    <property type="protein sequence ID" value="CAL62580.1"/>
    <property type="molecule type" value="Genomic_DNA"/>
</dbReference>
<dbReference type="SMR" id="A4G7U3"/>
<dbReference type="STRING" id="204773.HEAR2451"/>
<dbReference type="KEGG" id="har:HEAR2451"/>
<dbReference type="eggNOG" id="COG0268">
    <property type="taxonomic scope" value="Bacteria"/>
</dbReference>
<dbReference type="HOGENOM" id="CLU_160655_4_0_4"/>
<dbReference type="OrthoDB" id="9807974at2"/>
<dbReference type="Proteomes" id="UP000006697">
    <property type="component" value="Chromosome"/>
</dbReference>
<dbReference type="GO" id="GO:0005829">
    <property type="term" value="C:cytosol"/>
    <property type="evidence" value="ECO:0007669"/>
    <property type="project" value="TreeGrafter"/>
</dbReference>
<dbReference type="GO" id="GO:0015935">
    <property type="term" value="C:small ribosomal subunit"/>
    <property type="evidence" value="ECO:0007669"/>
    <property type="project" value="TreeGrafter"/>
</dbReference>
<dbReference type="GO" id="GO:0070181">
    <property type="term" value="F:small ribosomal subunit rRNA binding"/>
    <property type="evidence" value="ECO:0007669"/>
    <property type="project" value="TreeGrafter"/>
</dbReference>
<dbReference type="GO" id="GO:0003735">
    <property type="term" value="F:structural constituent of ribosome"/>
    <property type="evidence" value="ECO:0007669"/>
    <property type="project" value="InterPro"/>
</dbReference>
<dbReference type="GO" id="GO:0006412">
    <property type="term" value="P:translation"/>
    <property type="evidence" value="ECO:0007669"/>
    <property type="project" value="UniProtKB-UniRule"/>
</dbReference>
<dbReference type="FunFam" id="1.20.58.110:FF:000001">
    <property type="entry name" value="30S ribosomal protein S20"/>
    <property type="match status" value="1"/>
</dbReference>
<dbReference type="Gene3D" id="1.20.58.110">
    <property type="entry name" value="Ribosomal protein S20"/>
    <property type="match status" value="1"/>
</dbReference>
<dbReference type="HAMAP" id="MF_00500">
    <property type="entry name" value="Ribosomal_bS20"/>
    <property type="match status" value="1"/>
</dbReference>
<dbReference type="InterPro" id="IPR002583">
    <property type="entry name" value="Ribosomal_bS20"/>
</dbReference>
<dbReference type="InterPro" id="IPR036510">
    <property type="entry name" value="Ribosomal_bS20_sf"/>
</dbReference>
<dbReference type="NCBIfam" id="TIGR00029">
    <property type="entry name" value="S20"/>
    <property type="match status" value="1"/>
</dbReference>
<dbReference type="PANTHER" id="PTHR33398">
    <property type="entry name" value="30S RIBOSOMAL PROTEIN S20"/>
    <property type="match status" value="1"/>
</dbReference>
<dbReference type="PANTHER" id="PTHR33398:SF1">
    <property type="entry name" value="SMALL RIBOSOMAL SUBUNIT PROTEIN BS20C"/>
    <property type="match status" value="1"/>
</dbReference>
<dbReference type="Pfam" id="PF01649">
    <property type="entry name" value="Ribosomal_S20p"/>
    <property type="match status" value="1"/>
</dbReference>
<dbReference type="SUPFAM" id="SSF46992">
    <property type="entry name" value="Ribosomal protein S20"/>
    <property type="match status" value="1"/>
</dbReference>